<comment type="function">
    <text evidence="1">Possibly the antitoxin component of a type II toxin-antitoxin (TA) system.</text>
</comment>
<comment type="similarity">
    <text evidence="1">Belongs to the UPF0330 family.</text>
</comment>
<dbReference type="EMBL" id="AE008384">
    <property type="protein sequence ID" value="AAM32171.1"/>
    <property type="molecule type" value="Genomic_DNA"/>
</dbReference>
<dbReference type="RefSeq" id="WP_011034393.1">
    <property type="nucleotide sequence ID" value="NC_003901.1"/>
</dbReference>
<dbReference type="SMR" id="Q8PU66"/>
<dbReference type="GeneID" id="1480817"/>
<dbReference type="KEGG" id="mma:MM_2475"/>
<dbReference type="PATRIC" id="fig|192952.21.peg.2832"/>
<dbReference type="eggNOG" id="arCOG02681">
    <property type="taxonomic scope" value="Archaea"/>
</dbReference>
<dbReference type="HOGENOM" id="CLU_170073_1_0_2"/>
<dbReference type="Proteomes" id="UP000000595">
    <property type="component" value="Chromosome"/>
</dbReference>
<dbReference type="HAMAP" id="MF_00794">
    <property type="entry name" value="UPF0330"/>
    <property type="match status" value="1"/>
</dbReference>
<dbReference type="InterPro" id="IPR003847">
    <property type="entry name" value="Put_antitoxin"/>
</dbReference>
<dbReference type="NCBIfam" id="NF010249">
    <property type="entry name" value="PRK13696.1-1"/>
    <property type="match status" value="1"/>
</dbReference>
<dbReference type="Pfam" id="PF02697">
    <property type="entry name" value="VAPB_antitox"/>
    <property type="match status" value="1"/>
</dbReference>
<reference key="1">
    <citation type="journal article" date="2002" name="J. Mol. Microbiol. Biotechnol.">
        <title>The genome of Methanosarcina mazei: evidence for lateral gene transfer between Bacteria and Archaea.</title>
        <authorList>
            <person name="Deppenmeier U."/>
            <person name="Johann A."/>
            <person name="Hartsch T."/>
            <person name="Merkl R."/>
            <person name="Schmitz R.A."/>
            <person name="Martinez-Arias R."/>
            <person name="Henne A."/>
            <person name="Wiezer A."/>
            <person name="Baeumer S."/>
            <person name="Jacobi C."/>
            <person name="Brueggemann H."/>
            <person name="Lienard T."/>
            <person name="Christmann A."/>
            <person name="Boemecke M."/>
            <person name="Steckel S."/>
            <person name="Bhattacharyya A."/>
            <person name="Lykidis A."/>
            <person name="Overbeek R."/>
            <person name="Klenk H.-P."/>
            <person name="Gunsalus R.P."/>
            <person name="Fritz H.-J."/>
            <person name="Gottschalk G."/>
        </authorList>
    </citation>
    <scope>NUCLEOTIDE SEQUENCE [LARGE SCALE GENOMIC DNA]</scope>
    <source>
        <strain>ATCC BAA-159 / DSM 3647 / Goe1 / Go1 / JCM 11833 / OCM 88</strain>
    </source>
</reference>
<sequence>MPTRTISISEEAYERLKSLKTSEKDSFSDVILKYYPRKRKLSEVLAEIGSNPELADAIEKASRDMRKAKMRNVDLDAGA</sequence>
<proteinExistence type="inferred from homology"/>
<organism>
    <name type="scientific">Methanosarcina mazei (strain ATCC BAA-159 / DSM 3647 / Goe1 / Go1 / JCM 11833 / OCM 88)</name>
    <name type="common">Methanosarcina frisia</name>
    <dbReference type="NCBI Taxonomy" id="192952"/>
    <lineage>
        <taxon>Archaea</taxon>
        <taxon>Methanobacteriati</taxon>
        <taxon>Methanobacteriota</taxon>
        <taxon>Stenosarchaea group</taxon>
        <taxon>Methanomicrobia</taxon>
        <taxon>Methanosarcinales</taxon>
        <taxon>Methanosarcinaceae</taxon>
        <taxon>Methanosarcina</taxon>
    </lineage>
</organism>
<evidence type="ECO:0000255" key="1">
    <source>
        <dbReference type="HAMAP-Rule" id="MF_00794"/>
    </source>
</evidence>
<protein>
    <recommendedName>
        <fullName evidence="1">Putative antitoxin MM_2475</fullName>
    </recommendedName>
</protein>
<gene>
    <name type="ordered locus">MM_2475</name>
</gene>
<accession>Q8PU66</accession>
<keyword id="KW-1277">Toxin-antitoxin system</keyword>
<feature type="chain" id="PRO_0000157109" description="Putative antitoxin MM_2475">
    <location>
        <begin position="1"/>
        <end position="79"/>
    </location>
</feature>
<name>Y2475_METMA</name>